<evidence type="ECO:0000255" key="1">
    <source>
        <dbReference type="HAMAP-Rule" id="MF_00333"/>
    </source>
</evidence>
<protein>
    <recommendedName>
        <fullName evidence="1">Oxygen-dependent coproporphyrinogen-III oxidase</fullName>
        <shortName evidence="1">CPO</shortName>
        <shortName evidence="1">Coprogen oxidase</shortName>
        <shortName evidence="1">Coproporphyrinogenase</shortName>
        <ecNumber evidence="1">1.3.3.3</ecNumber>
    </recommendedName>
</protein>
<dbReference type="EC" id="1.3.3.3" evidence="1"/>
<dbReference type="EMBL" id="CP000095">
    <property type="protein sequence ID" value="AAZ58644.1"/>
    <property type="molecule type" value="Genomic_DNA"/>
</dbReference>
<dbReference type="RefSeq" id="WP_011295498.1">
    <property type="nucleotide sequence ID" value="NC_007335.2"/>
</dbReference>
<dbReference type="SMR" id="Q46IN4"/>
<dbReference type="STRING" id="59920.PMN2A_1154"/>
<dbReference type="KEGG" id="pmn:PMN2A_1154"/>
<dbReference type="HOGENOM" id="CLU_026169_0_1_3"/>
<dbReference type="OrthoDB" id="9777553at2"/>
<dbReference type="PhylomeDB" id="Q46IN4"/>
<dbReference type="UniPathway" id="UPA00251">
    <property type="reaction ID" value="UER00322"/>
</dbReference>
<dbReference type="Proteomes" id="UP000002535">
    <property type="component" value="Chromosome"/>
</dbReference>
<dbReference type="GO" id="GO:0005737">
    <property type="term" value="C:cytoplasm"/>
    <property type="evidence" value="ECO:0007669"/>
    <property type="project" value="UniProtKB-SubCell"/>
</dbReference>
<dbReference type="GO" id="GO:0004109">
    <property type="term" value="F:coproporphyrinogen oxidase activity"/>
    <property type="evidence" value="ECO:0007669"/>
    <property type="project" value="UniProtKB-UniRule"/>
</dbReference>
<dbReference type="GO" id="GO:0046872">
    <property type="term" value="F:metal ion binding"/>
    <property type="evidence" value="ECO:0007669"/>
    <property type="project" value="UniProtKB-KW"/>
</dbReference>
<dbReference type="GO" id="GO:0042803">
    <property type="term" value="F:protein homodimerization activity"/>
    <property type="evidence" value="ECO:0000250"/>
    <property type="project" value="UniProtKB"/>
</dbReference>
<dbReference type="GO" id="GO:0015995">
    <property type="term" value="P:chlorophyll biosynthetic process"/>
    <property type="evidence" value="ECO:0007669"/>
    <property type="project" value="UniProtKB-UniRule"/>
</dbReference>
<dbReference type="GO" id="GO:0006782">
    <property type="term" value="P:protoporphyrinogen IX biosynthetic process"/>
    <property type="evidence" value="ECO:0007669"/>
    <property type="project" value="UniProtKB-UniRule"/>
</dbReference>
<dbReference type="FunFam" id="3.40.1500.10:FF:000007">
    <property type="entry name" value="Oxygen-dependent coproporphyrinogen-III oxidase"/>
    <property type="match status" value="1"/>
</dbReference>
<dbReference type="Gene3D" id="3.40.1500.10">
    <property type="entry name" value="Coproporphyrinogen III oxidase, aerobic"/>
    <property type="match status" value="1"/>
</dbReference>
<dbReference type="HAMAP" id="MF_00333">
    <property type="entry name" value="Coprogen_oxidas"/>
    <property type="match status" value="1"/>
</dbReference>
<dbReference type="InterPro" id="IPR001260">
    <property type="entry name" value="Coprogen_oxidase_aer"/>
</dbReference>
<dbReference type="InterPro" id="IPR036406">
    <property type="entry name" value="Coprogen_oxidase_aer_sf"/>
</dbReference>
<dbReference type="InterPro" id="IPR018375">
    <property type="entry name" value="Coprogen_oxidase_CS"/>
</dbReference>
<dbReference type="NCBIfam" id="NF003727">
    <property type="entry name" value="PRK05330.1"/>
    <property type="match status" value="1"/>
</dbReference>
<dbReference type="PANTHER" id="PTHR10755">
    <property type="entry name" value="COPROPORPHYRINOGEN III OXIDASE, MITOCHONDRIAL"/>
    <property type="match status" value="1"/>
</dbReference>
<dbReference type="PANTHER" id="PTHR10755:SF0">
    <property type="entry name" value="OXYGEN-DEPENDENT COPROPORPHYRINOGEN-III OXIDASE, MITOCHONDRIAL"/>
    <property type="match status" value="1"/>
</dbReference>
<dbReference type="Pfam" id="PF01218">
    <property type="entry name" value="Coprogen_oxidas"/>
    <property type="match status" value="1"/>
</dbReference>
<dbReference type="PIRSF" id="PIRSF000166">
    <property type="entry name" value="Coproporphyri_ox"/>
    <property type="match status" value="1"/>
</dbReference>
<dbReference type="PRINTS" id="PR00073">
    <property type="entry name" value="COPRGNOXDASE"/>
</dbReference>
<dbReference type="SUPFAM" id="SSF102886">
    <property type="entry name" value="Coproporphyrinogen III oxidase"/>
    <property type="match status" value="1"/>
</dbReference>
<dbReference type="PROSITE" id="PS01021">
    <property type="entry name" value="COPROGEN_OXIDASE"/>
    <property type="match status" value="1"/>
</dbReference>
<organism>
    <name type="scientific">Prochlorococcus marinus (strain NATL2A)</name>
    <dbReference type="NCBI Taxonomy" id="59920"/>
    <lineage>
        <taxon>Bacteria</taxon>
        <taxon>Bacillati</taxon>
        <taxon>Cyanobacteriota</taxon>
        <taxon>Cyanophyceae</taxon>
        <taxon>Synechococcales</taxon>
        <taxon>Prochlorococcaceae</taxon>
        <taxon>Prochlorococcus</taxon>
    </lineage>
</organism>
<name>HEM6_PROMT</name>
<comment type="function">
    <text evidence="1">Involved in the heme and chlorophyll biosynthesis. Catalyzes the aerobic oxidative decarboxylation of propionate groups of rings A and B of coproporphyrinogen-III to yield the vinyl groups in protoporphyrinogen-IX.</text>
</comment>
<comment type="catalytic activity">
    <reaction evidence="1">
        <text>coproporphyrinogen III + O2 + 2 H(+) = protoporphyrinogen IX + 2 CO2 + 2 H2O</text>
        <dbReference type="Rhea" id="RHEA:18257"/>
        <dbReference type="ChEBI" id="CHEBI:15377"/>
        <dbReference type="ChEBI" id="CHEBI:15378"/>
        <dbReference type="ChEBI" id="CHEBI:15379"/>
        <dbReference type="ChEBI" id="CHEBI:16526"/>
        <dbReference type="ChEBI" id="CHEBI:57307"/>
        <dbReference type="ChEBI" id="CHEBI:57309"/>
        <dbReference type="EC" id="1.3.3.3"/>
    </reaction>
</comment>
<comment type="cofactor">
    <cofactor evidence="1">
        <name>a divalent metal cation</name>
        <dbReference type="ChEBI" id="CHEBI:60240"/>
    </cofactor>
</comment>
<comment type="pathway">
    <text evidence="1">Porphyrin-containing compound metabolism; protoporphyrin-IX biosynthesis; protoporphyrinogen-IX from coproporphyrinogen-III (O2 route): step 1/1.</text>
</comment>
<comment type="subunit">
    <text evidence="1">Homodimer.</text>
</comment>
<comment type="subcellular location">
    <subcellularLocation>
        <location evidence="1">Cytoplasm</location>
    </subcellularLocation>
</comment>
<comment type="similarity">
    <text evidence="1">Belongs to the aerobic coproporphyrinogen-III oxidase family.</text>
</comment>
<feature type="chain" id="PRO_1000019481" description="Oxygen-dependent coproporphyrinogen-III oxidase">
    <location>
        <begin position="1"/>
        <end position="348"/>
    </location>
</feature>
<feature type="region of interest" description="Important for dimerization" evidence="1">
    <location>
        <begin position="272"/>
        <end position="307"/>
    </location>
</feature>
<feature type="active site" description="Proton donor" evidence="1">
    <location>
        <position position="118"/>
    </location>
</feature>
<feature type="binding site" evidence="1">
    <location>
        <position position="104"/>
    </location>
    <ligand>
        <name>substrate</name>
    </ligand>
</feature>
<feature type="binding site" evidence="1">
    <location>
        <position position="108"/>
    </location>
    <ligand>
        <name>a divalent metal cation</name>
        <dbReference type="ChEBI" id="CHEBI:60240"/>
    </ligand>
</feature>
<feature type="binding site" evidence="1">
    <location>
        <position position="118"/>
    </location>
    <ligand>
        <name>a divalent metal cation</name>
        <dbReference type="ChEBI" id="CHEBI:60240"/>
    </ligand>
</feature>
<feature type="binding site" evidence="1">
    <location>
        <begin position="120"/>
        <end position="122"/>
    </location>
    <ligand>
        <name>substrate</name>
    </ligand>
</feature>
<feature type="binding site" evidence="1">
    <location>
        <position position="152"/>
    </location>
    <ligand>
        <name>a divalent metal cation</name>
        <dbReference type="ChEBI" id="CHEBI:60240"/>
    </ligand>
</feature>
<feature type="binding site" evidence="1">
    <location>
        <position position="182"/>
    </location>
    <ligand>
        <name>a divalent metal cation</name>
        <dbReference type="ChEBI" id="CHEBI:60240"/>
    </ligand>
</feature>
<feature type="site" description="Important for dimerization" evidence="1">
    <location>
        <position position="182"/>
    </location>
</feature>
<sequence>MSSSQDKANLPANNSRARAKKLVLELQDEICAGLETIDGEGKFLEESWERPEGGGGRSRVLKDGQIFEQGGVNFSEVHGNELPPSIISQRPEAKGHSWFATGTSMVLHPKSPYIPTVHLNYRYFEAGPVWWFGGGADLTPFYPYLSDTRHFHSCHKNACDTIDKDLHKVFKPWCDEYFFLKHRNETRGVGGIFYDYQDGSGLLYKGQNANGKASKIAKELGEYSLNWENLFSLAKACGQAFLPSYEPIIKKRKNQSFSTKERDFQLYRRGRYAEFNLVWDRGTIFGLQTNGRTESILMSLPPLARWEYGYKPEENSREALLTDLFTKPQDWFTDKSLEKRCLTHQALD</sequence>
<keyword id="KW-0149">Chlorophyll biosynthesis</keyword>
<keyword id="KW-0963">Cytoplasm</keyword>
<keyword id="KW-0350">Heme biosynthesis</keyword>
<keyword id="KW-0479">Metal-binding</keyword>
<keyword id="KW-0560">Oxidoreductase</keyword>
<keyword id="KW-0627">Porphyrin biosynthesis</keyword>
<keyword id="KW-1185">Reference proteome</keyword>
<gene>
    <name evidence="1" type="primary">hemF</name>
    <name type="ordered locus">PMN2A_1154</name>
</gene>
<accession>Q46IN4</accession>
<proteinExistence type="inferred from homology"/>
<reference key="1">
    <citation type="journal article" date="2007" name="PLoS Genet.">
        <title>Patterns and implications of gene gain and loss in the evolution of Prochlorococcus.</title>
        <authorList>
            <person name="Kettler G.C."/>
            <person name="Martiny A.C."/>
            <person name="Huang K."/>
            <person name="Zucker J."/>
            <person name="Coleman M.L."/>
            <person name="Rodrigue S."/>
            <person name="Chen F."/>
            <person name="Lapidus A."/>
            <person name="Ferriera S."/>
            <person name="Johnson J."/>
            <person name="Steglich C."/>
            <person name="Church G.M."/>
            <person name="Richardson P."/>
            <person name="Chisholm S.W."/>
        </authorList>
    </citation>
    <scope>NUCLEOTIDE SEQUENCE [LARGE SCALE GENOMIC DNA]</scope>
    <source>
        <strain>NATL2A</strain>
    </source>
</reference>